<keyword id="KW-0479">Metal-binding</keyword>
<keyword id="KW-0480">Metal-thiolate cluster</keyword>
<organism>
    <name type="scientific">Barbatula barbatula</name>
    <name type="common">Stone loach</name>
    <name type="synonym">Noemacheilus barbatulus</name>
    <dbReference type="NCBI Taxonomy" id="135647"/>
    <lineage>
        <taxon>Eukaryota</taxon>
        <taxon>Metazoa</taxon>
        <taxon>Chordata</taxon>
        <taxon>Craniata</taxon>
        <taxon>Vertebrata</taxon>
        <taxon>Euteleostomi</taxon>
        <taxon>Actinopterygii</taxon>
        <taxon>Neopterygii</taxon>
        <taxon>Teleostei</taxon>
        <taxon>Ostariophysi</taxon>
        <taxon>Cypriniformes</taxon>
        <taxon>Nemacheilidae</taxon>
        <taxon>Barbatula</taxon>
    </lineage>
</organism>
<feature type="chain" id="PRO_0000197292" description="Metallothionein">
    <location>
        <begin position="1"/>
        <end position="60"/>
    </location>
</feature>
<feature type="region of interest" description="Beta">
    <location>
        <begin position="1"/>
        <end position="28"/>
    </location>
</feature>
<feature type="region of interest" description="Alpha">
    <location>
        <begin position="29"/>
        <end position="60"/>
    </location>
</feature>
<feature type="binding site" evidence="2">
    <location>
        <position position="4"/>
    </location>
    <ligand>
        <name>a divalent metal cation</name>
        <dbReference type="ChEBI" id="CHEBI:60240"/>
        <label>1</label>
        <note>in cluster B</note>
    </ligand>
</feature>
<feature type="binding site" evidence="2">
    <location>
        <position position="6"/>
    </location>
    <ligand>
        <name>a divalent metal cation</name>
        <dbReference type="ChEBI" id="CHEBI:60240"/>
        <label>1</label>
        <note>in cluster B</note>
    </ligand>
</feature>
<feature type="binding site" evidence="2">
    <location>
        <position position="6"/>
    </location>
    <ligand>
        <name>a divalent metal cation</name>
        <dbReference type="ChEBI" id="CHEBI:60240"/>
        <label>2</label>
        <note>in cluster B</note>
    </ligand>
</feature>
<feature type="binding site" evidence="2">
    <location>
        <position position="12"/>
    </location>
    <ligand>
        <name>a divalent metal cation</name>
        <dbReference type="ChEBI" id="CHEBI:60240"/>
        <label>2</label>
        <note>in cluster B</note>
    </ligand>
</feature>
<feature type="binding site" evidence="2">
    <location>
        <position position="14"/>
    </location>
    <ligand>
        <name>a divalent metal cation</name>
        <dbReference type="ChEBI" id="CHEBI:60240"/>
        <label>2</label>
        <note>in cluster B</note>
    </ligand>
</feature>
<feature type="binding site" evidence="2">
    <location>
        <position position="14"/>
    </location>
    <ligand>
        <name>a divalent metal cation</name>
        <dbReference type="ChEBI" id="CHEBI:60240"/>
        <label>3</label>
        <note>in cluster B</note>
    </ligand>
</feature>
<feature type="binding site" evidence="2">
    <location>
        <position position="18"/>
    </location>
    <ligand>
        <name>a divalent metal cation</name>
        <dbReference type="ChEBI" id="CHEBI:60240"/>
        <label>3</label>
        <note>in cluster B</note>
    </ligand>
</feature>
<feature type="binding site" evidence="2">
    <location>
        <position position="20"/>
    </location>
    <ligand>
        <name>a divalent metal cation</name>
        <dbReference type="ChEBI" id="CHEBI:60240"/>
        <label>1</label>
        <note>in cluster B</note>
    </ligand>
</feature>
<feature type="binding site" evidence="2">
    <location>
        <position position="23"/>
    </location>
    <ligand>
        <name>a divalent metal cation</name>
        <dbReference type="ChEBI" id="CHEBI:60240"/>
        <label>1</label>
        <note>in cluster B</note>
    </ligand>
</feature>
<feature type="binding site" evidence="2">
    <location>
        <position position="23"/>
    </location>
    <ligand>
        <name>a divalent metal cation</name>
        <dbReference type="ChEBI" id="CHEBI:60240"/>
        <label>3</label>
        <note>in cluster B</note>
    </ligand>
</feature>
<feature type="binding site" evidence="2">
    <location>
        <position position="25"/>
    </location>
    <ligand>
        <name>a divalent metal cation</name>
        <dbReference type="ChEBI" id="CHEBI:60240"/>
        <label>2</label>
        <note>in cluster B</note>
    </ligand>
</feature>
<feature type="binding site" evidence="2">
    <location>
        <position position="28"/>
    </location>
    <ligand>
        <name>a divalent metal cation</name>
        <dbReference type="ChEBI" id="CHEBI:60240"/>
        <label>3</label>
        <note>in cluster B</note>
    </ligand>
</feature>
<feature type="binding site" evidence="2">
    <location>
        <position position="32"/>
    </location>
    <ligand>
        <name>a divalent metal cation</name>
        <dbReference type="ChEBI" id="CHEBI:60240"/>
        <label>4</label>
        <note>in cluster A</note>
    </ligand>
</feature>
<feature type="binding site" evidence="2">
    <location>
        <position position="33"/>
    </location>
    <ligand>
        <name>a divalent metal cation</name>
        <dbReference type="ChEBI" id="CHEBI:60240"/>
        <label>4</label>
        <note>in cluster A</note>
    </ligand>
</feature>
<feature type="binding site" evidence="2">
    <location>
        <position position="33"/>
    </location>
    <ligand>
        <name>a divalent metal cation</name>
        <dbReference type="ChEBI" id="CHEBI:60240"/>
        <label>5</label>
        <note>in cluster A</note>
    </ligand>
</feature>
<feature type="binding site" evidence="2">
    <location>
        <position position="35"/>
    </location>
    <ligand>
        <name>a divalent metal cation</name>
        <dbReference type="ChEBI" id="CHEBI:60240"/>
        <label>5</label>
        <note>in cluster A</note>
    </ligand>
</feature>
<feature type="binding site" evidence="2">
    <location>
        <position position="36"/>
    </location>
    <ligand>
        <name>a divalent metal cation</name>
        <dbReference type="ChEBI" id="CHEBI:60240"/>
        <label>5</label>
        <note>in cluster A</note>
    </ligand>
</feature>
<feature type="binding site" evidence="2">
    <location>
        <position position="36"/>
    </location>
    <ligand>
        <name>a divalent metal cation</name>
        <dbReference type="ChEBI" id="CHEBI:60240"/>
        <label>6</label>
        <note>in cluster A</note>
    </ligand>
</feature>
<feature type="binding site" evidence="2">
    <location>
        <position position="40"/>
    </location>
    <ligand>
        <name>a divalent metal cation</name>
        <dbReference type="ChEBI" id="CHEBI:60240"/>
        <label>6</label>
        <note>in cluster A</note>
    </ligand>
</feature>
<feature type="binding site" evidence="2">
    <location>
        <position position="43"/>
    </location>
    <ligand>
        <name>a divalent metal cation</name>
        <dbReference type="ChEBI" id="CHEBI:60240"/>
        <label>4</label>
        <note>in cluster A</note>
    </ligand>
</feature>
<feature type="binding site" evidence="2">
    <location>
        <position position="43"/>
    </location>
    <ligand>
        <name>a divalent metal cation</name>
        <dbReference type="ChEBI" id="CHEBI:60240"/>
        <label>6</label>
        <note>in cluster A</note>
    </ligand>
</feature>
<feature type="binding site" evidence="2">
    <location>
        <position position="47"/>
    </location>
    <ligand>
        <name>a divalent metal cation</name>
        <dbReference type="ChEBI" id="CHEBI:60240"/>
        <label>4</label>
        <note>in cluster A</note>
    </ligand>
</feature>
<feature type="binding site" evidence="2">
    <location>
        <position position="49"/>
    </location>
    <ligand>
        <name>a divalent metal cation</name>
        <dbReference type="ChEBI" id="CHEBI:60240"/>
        <label>5</label>
        <note>in cluster A</note>
    </ligand>
</feature>
<feature type="binding site" evidence="2">
    <location>
        <position position="49"/>
    </location>
    <ligand>
        <name>a divalent metal cation</name>
        <dbReference type="ChEBI" id="CHEBI:60240"/>
        <label>7</label>
        <note>in cluster A</note>
    </ligand>
</feature>
<feature type="binding site" evidence="3">
    <location>
        <position position="54"/>
    </location>
    <ligand>
        <name>a divalent metal cation</name>
        <dbReference type="ChEBI" id="CHEBI:60240"/>
        <label>7</label>
        <note>in cluster A</note>
    </ligand>
</feature>
<feature type="binding site" evidence="2">
    <location>
        <position position="58"/>
    </location>
    <ligand>
        <name>a divalent metal cation</name>
        <dbReference type="ChEBI" id="CHEBI:60240"/>
        <label>7</label>
        <note>in cluster A</note>
    </ligand>
</feature>
<feature type="binding site" evidence="2">
    <location>
        <position position="59"/>
    </location>
    <ligand>
        <name>a divalent metal cation</name>
        <dbReference type="ChEBI" id="CHEBI:60240"/>
        <label>6</label>
        <note>in cluster A</note>
    </ligand>
</feature>
<feature type="binding site" evidence="2">
    <location>
        <position position="59"/>
    </location>
    <ligand>
        <name>a divalent metal cation</name>
        <dbReference type="ChEBI" id="CHEBI:60240"/>
        <label>7</label>
        <note>in cluster A</note>
    </ligand>
</feature>
<reference key="1">
    <citation type="journal article" date="1991" name="Biochim. Biophys. Acta">
        <title>Elucidation of cDNA sequences for metallothioneins from rainbow trout, stone loach and pike liver using the polymerase chain reaction.</title>
        <authorList>
            <person name="Kille P."/>
            <person name="Stephens P.E."/>
            <person name="Kay J."/>
        </authorList>
    </citation>
    <scope>NUCLEOTIDE SEQUENCE [MRNA]</scope>
    <source>
        <tissue>Liver</tissue>
    </source>
</reference>
<reference key="2">
    <citation type="journal article" date="1993" name="Biochim. Biophys. Acta">
        <title>Analysis of regulatory elements flanking metallothionein genes in Cd-tolerant fish (pike and stone loach).</title>
        <authorList>
            <person name="Kille P."/>
            <person name="Kay J."/>
            <person name="Sweeney G.E."/>
        </authorList>
    </citation>
    <scope>NUCLEOTIDE SEQUENCE [GENOMIC DNA]</scope>
    <source>
        <tissue>Kidney</tissue>
    </source>
</reference>
<dbReference type="EMBL" id="X59393">
    <property type="protein sequence ID" value="CAA42036.1"/>
    <property type="molecule type" value="mRNA"/>
</dbReference>
<dbReference type="EMBL" id="X70043">
    <property type="protein sequence ID" value="CAA49637.1"/>
    <property type="status" value="ALT_SEQ"/>
    <property type="molecule type" value="Genomic_DNA"/>
</dbReference>
<dbReference type="PIR" id="S38335">
    <property type="entry name" value="S38335"/>
</dbReference>
<dbReference type="SMR" id="P25128"/>
<dbReference type="GO" id="GO:0046872">
    <property type="term" value="F:metal ion binding"/>
    <property type="evidence" value="ECO:0007669"/>
    <property type="project" value="UniProtKB-KW"/>
</dbReference>
<dbReference type="FunFam" id="4.10.10.10:FF:000001">
    <property type="entry name" value="Metallothionein"/>
    <property type="match status" value="1"/>
</dbReference>
<dbReference type="Gene3D" id="4.10.10.10">
    <property type="entry name" value="Metallothionein Isoform II"/>
    <property type="match status" value="1"/>
</dbReference>
<dbReference type="InterPro" id="IPR017854">
    <property type="entry name" value="Metalthion_dom_sf"/>
</dbReference>
<dbReference type="InterPro" id="IPR023587">
    <property type="entry name" value="Metalthion_dom_sf_vert"/>
</dbReference>
<dbReference type="InterPro" id="IPR000006">
    <property type="entry name" value="Metalthion_vert"/>
</dbReference>
<dbReference type="InterPro" id="IPR018064">
    <property type="entry name" value="Metalthion_vert_metal_BS"/>
</dbReference>
<dbReference type="PANTHER" id="PTHR23299">
    <property type="entry name" value="METALLOTHIONEIN"/>
    <property type="match status" value="1"/>
</dbReference>
<dbReference type="PANTHER" id="PTHR23299:SF24">
    <property type="entry name" value="METALLOTHIONEIN-1X"/>
    <property type="match status" value="1"/>
</dbReference>
<dbReference type="Pfam" id="PF00131">
    <property type="entry name" value="Metallothio"/>
    <property type="match status" value="1"/>
</dbReference>
<dbReference type="PRINTS" id="PR00860">
    <property type="entry name" value="MTVERTEBRATE"/>
</dbReference>
<dbReference type="SUPFAM" id="SSF57868">
    <property type="entry name" value="Metallothionein"/>
    <property type="match status" value="1"/>
</dbReference>
<dbReference type="PROSITE" id="PS00203">
    <property type="entry name" value="METALLOTHIONEIN_VRT"/>
    <property type="match status" value="1"/>
</dbReference>
<name>MT_BARBB</name>
<gene>
    <name type="primary">mt</name>
</gene>
<protein>
    <recommendedName>
        <fullName>Metallothionein</fullName>
        <shortName>MT</shortName>
    </recommendedName>
</protein>
<sequence>MDPCDCSKTGTCNCGATCKCTNCQCTTCKKSCCSCCPSGCSKCASGCVCKGNSCDSSCCQ</sequence>
<accession>P25128</accession>
<accession>Q91127</accession>
<evidence type="ECO:0000250" key="1"/>
<evidence type="ECO:0000250" key="2">
    <source>
        <dbReference type="UniProtKB" id="P02795"/>
    </source>
</evidence>
<evidence type="ECO:0000250" key="3">
    <source>
        <dbReference type="UniProtKB" id="P62339"/>
    </source>
</evidence>
<evidence type="ECO:0000305" key="4"/>
<comment type="function">
    <text evidence="1">Metallothioneins have a high content of cysteine residues that bind various heavy metals.</text>
</comment>
<comment type="domain">
    <text>Class I metallothioneins contain 2 metal-binding domains: four divalent ions are chelated within cluster A of the alpha domain and are coordinated via cysteinyl thiolate bridges to 11 cysteine ligands. Cluster B, the corresponding region within the beta domain, can ligate three divalent ions to 9 cysteines.</text>
</comment>
<comment type="similarity">
    <text evidence="4">Belongs to the metallothionein superfamily. Type 1 family.</text>
</comment>
<proteinExistence type="inferred from homology"/>